<proteinExistence type="inferred from homology"/>
<protein>
    <recommendedName>
        <fullName>Neutral protease 2 homolog BDBG_02110</fullName>
        <ecNumber>3.4.24.39</ecNumber>
    </recommendedName>
    <alternativeName>
        <fullName>Deuterolysin BDBG_02110</fullName>
    </alternativeName>
</protein>
<comment type="function">
    <text evidence="1">Secreted metalloproteinase that allows assimilation of proteinaceous substrates. Shows high activities on basic nuclear substrates such as histone and protamine (By similarity).</text>
</comment>
<comment type="catalytic activity">
    <reaction>
        <text>Preferential cleavage of bonds with hydrophobic residues in P1'. Also 3-Asn-|-Gln-4 and 8-Gly-|-Ser-9 bonds in insulin B chain.</text>
        <dbReference type="EC" id="3.4.24.39"/>
    </reaction>
</comment>
<comment type="cofactor">
    <cofactor evidence="1">
        <name>Zn(2+)</name>
        <dbReference type="ChEBI" id="CHEBI:29105"/>
    </cofactor>
    <text evidence="1">Binds 1 zinc ion per subunit.</text>
</comment>
<comment type="subcellular location">
    <subcellularLocation>
        <location evidence="1">Secreted</location>
    </subcellularLocation>
</comment>
<comment type="similarity">
    <text evidence="3">Belongs to the peptidase M35 family.</text>
</comment>
<organism>
    <name type="scientific">Blastomyces gilchristii (strain SLH14081)</name>
    <name type="common">Blastomyces dermatitidis</name>
    <dbReference type="NCBI Taxonomy" id="559298"/>
    <lineage>
        <taxon>Eukaryota</taxon>
        <taxon>Fungi</taxon>
        <taxon>Dikarya</taxon>
        <taxon>Ascomycota</taxon>
        <taxon>Pezizomycotina</taxon>
        <taxon>Eurotiomycetes</taxon>
        <taxon>Eurotiomycetidae</taxon>
        <taxon>Onygenales</taxon>
        <taxon>Ajellomycetaceae</taxon>
        <taxon>Blastomyces</taxon>
    </lineage>
</organism>
<feature type="signal peptide" evidence="2">
    <location>
        <begin position="1"/>
        <end position="19"/>
    </location>
</feature>
<feature type="chain" id="PRO_0000407118" description="Neutral protease 2 homolog BDBG_02110">
    <location>
        <begin position="20"/>
        <end position="366"/>
    </location>
</feature>
<feature type="propeptide" id="PRO_0000407119" evidence="1">
    <location>
        <begin position="23"/>
        <end position="184"/>
    </location>
</feature>
<feature type="active site" evidence="1">
    <location>
        <position position="315"/>
    </location>
</feature>
<feature type="binding site" evidence="1">
    <location>
        <position position="314"/>
    </location>
    <ligand>
        <name>Zn(2+)</name>
        <dbReference type="ChEBI" id="CHEBI:29105"/>
        <note>catalytic</note>
    </ligand>
</feature>
<feature type="binding site" evidence="1">
    <location>
        <position position="318"/>
    </location>
    <ligand>
        <name>Zn(2+)</name>
        <dbReference type="ChEBI" id="CHEBI:29105"/>
        <note>catalytic</note>
    </ligand>
</feature>
<feature type="glycosylation site" description="N-linked (GlcNAc...) asparagine" evidence="2">
    <location>
        <position position="123"/>
    </location>
</feature>
<feature type="glycosylation site" description="N-linked (GlcNAc...) asparagine" evidence="2">
    <location>
        <position position="192"/>
    </location>
</feature>
<feature type="disulfide bond" evidence="1">
    <location>
        <begin position="272"/>
        <end position="290"/>
    </location>
</feature>
<keyword id="KW-0165">Cleavage on pair of basic residues</keyword>
<keyword id="KW-1015">Disulfide bond</keyword>
<keyword id="KW-0325">Glycoprotein</keyword>
<keyword id="KW-0378">Hydrolase</keyword>
<keyword id="KW-0479">Metal-binding</keyword>
<keyword id="KW-0482">Metalloprotease</keyword>
<keyword id="KW-0645">Protease</keyword>
<keyword id="KW-1185">Reference proteome</keyword>
<keyword id="KW-0964">Secreted</keyword>
<keyword id="KW-0732">Signal</keyword>
<keyword id="KW-0862">Zinc</keyword>
<keyword id="KW-0865">Zymogen</keyword>
<gene>
    <name type="ORF">BDBG_02110</name>
</gene>
<dbReference type="EC" id="3.4.24.39"/>
<dbReference type="EMBL" id="GG657450">
    <property type="protein sequence ID" value="OAT05778.1"/>
    <property type="molecule type" value="Genomic_DNA"/>
</dbReference>
<dbReference type="EMBL" id="GG657450">
    <property type="protein sequence ID" value="OAT05779.1"/>
    <property type="molecule type" value="Genomic_DNA"/>
</dbReference>
<dbReference type="EMBL" id="GG657450">
    <property type="protein sequence ID" value="OAT05780.1"/>
    <property type="molecule type" value="Genomic_DNA"/>
</dbReference>
<dbReference type="RefSeq" id="XP_002627439.1">
    <property type="nucleotide sequence ID" value="XM_002627393.2"/>
</dbReference>
<dbReference type="RefSeq" id="XP_031576882.1">
    <property type="nucleotide sequence ID" value="XM_031720652.1"/>
</dbReference>
<dbReference type="RefSeq" id="XP_031576883.1">
    <property type="nucleotide sequence ID" value="XM_031720653.1"/>
</dbReference>
<dbReference type="SMR" id="C5JHY1"/>
<dbReference type="STRING" id="559298.C5JHY1"/>
<dbReference type="GeneID" id="8506618"/>
<dbReference type="KEGG" id="bgh:BDBG_02110"/>
<dbReference type="VEuPathDB" id="FungiDB:BDBG_02110"/>
<dbReference type="HOGENOM" id="CLU_039313_1_1_1"/>
<dbReference type="OrthoDB" id="412874at2759"/>
<dbReference type="Proteomes" id="UP000002038">
    <property type="component" value="Unassembled WGS sequence"/>
</dbReference>
<dbReference type="GO" id="GO:0005576">
    <property type="term" value="C:extracellular region"/>
    <property type="evidence" value="ECO:0007669"/>
    <property type="project" value="UniProtKB-SubCell"/>
</dbReference>
<dbReference type="GO" id="GO:0046872">
    <property type="term" value="F:metal ion binding"/>
    <property type="evidence" value="ECO:0007669"/>
    <property type="project" value="UniProtKB-KW"/>
</dbReference>
<dbReference type="GO" id="GO:0004222">
    <property type="term" value="F:metalloendopeptidase activity"/>
    <property type="evidence" value="ECO:0007669"/>
    <property type="project" value="InterPro"/>
</dbReference>
<dbReference type="GO" id="GO:0006508">
    <property type="term" value="P:proteolysis"/>
    <property type="evidence" value="ECO:0007669"/>
    <property type="project" value="UniProtKB-KW"/>
</dbReference>
<dbReference type="CDD" id="cd11008">
    <property type="entry name" value="M35_deuterolysin_like"/>
    <property type="match status" value="1"/>
</dbReference>
<dbReference type="Gene3D" id="2.60.40.2970">
    <property type="match status" value="1"/>
</dbReference>
<dbReference type="Gene3D" id="3.40.390.10">
    <property type="entry name" value="Collagenase (Catalytic Domain)"/>
    <property type="match status" value="1"/>
</dbReference>
<dbReference type="InterPro" id="IPR050414">
    <property type="entry name" value="Fungal_M35_metalloproteases"/>
</dbReference>
<dbReference type="InterPro" id="IPR029463">
    <property type="entry name" value="Lys_MEP"/>
</dbReference>
<dbReference type="InterPro" id="IPR024079">
    <property type="entry name" value="MetalloPept_cat_dom_sf"/>
</dbReference>
<dbReference type="InterPro" id="IPR001384">
    <property type="entry name" value="Peptidase_M35"/>
</dbReference>
<dbReference type="PANTHER" id="PTHR37016">
    <property type="match status" value="1"/>
</dbReference>
<dbReference type="PANTHER" id="PTHR37016:SF3">
    <property type="entry name" value="NEUTRAL PROTEASE 2-RELATED"/>
    <property type="match status" value="1"/>
</dbReference>
<dbReference type="Pfam" id="PF02102">
    <property type="entry name" value="Peptidase_M35"/>
    <property type="match status" value="1"/>
</dbReference>
<dbReference type="PRINTS" id="PR00768">
    <property type="entry name" value="DEUTEROLYSIN"/>
</dbReference>
<dbReference type="SMART" id="SM01351">
    <property type="entry name" value="Aspzincin_M35"/>
    <property type="match status" value="1"/>
</dbReference>
<dbReference type="SUPFAM" id="SSF55486">
    <property type="entry name" value="Metalloproteases ('zincins'), catalytic domain"/>
    <property type="match status" value="1"/>
</dbReference>
<name>NPIIB_BLAGS</name>
<evidence type="ECO:0000250" key="1"/>
<evidence type="ECO:0000255" key="2"/>
<evidence type="ECO:0000305" key="3"/>
<sequence length="366" mass="39271">MQLSSVLLTAAGLLAPVYSSAIISIGRRSEGLDVSLASTGNTKVQVSVTNTGSSEISILRANTLFDASPTKKFTVYKEGSRKEVPFKGVHLRRSPSDLAKDNLQPIGPGQTIDKEFDLAETLNLSESGTYIVSADGVFPIIDPKSFSIASVIPYESNELKIEVDGKQVSGVLSTRAKIHDHLAQRADFNNGNCTDHQKAVIASALKRDSSIAGEASNAALSGDVRVFEQYFRTTDPSIRQQVSDRFHAISNEACSAEGGVVKYQCEDEMDVCRPGTVAYALLGSNVVVNCPIYYSVTAVSQACDAGDQALTVIHELSHIDAVYYPATTDLAYGEDASMALNADMSIRNADSYTFYANAVRQNCNPS</sequence>
<reference key="1">
    <citation type="journal article" date="2015" name="PLoS Genet.">
        <title>The dynamic genome and transcriptome of the human fungal pathogen Blastomyces and close relative Emmonsia.</title>
        <authorList>
            <person name="Munoz J.F."/>
            <person name="Gauthier G.M."/>
            <person name="Desjardins C.A."/>
            <person name="Gallo J.E."/>
            <person name="Holder J."/>
            <person name="Sullivan T.D."/>
            <person name="Marty A.J."/>
            <person name="Carmen J.C."/>
            <person name="Chen Z."/>
            <person name="Ding L."/>
            <person name="Gujja S."/>
            <person name="Magrini V."/>
            <person name="Misas E."/>
            <person name="Mitreva M."/>
            <person name="Priest M."/>
            <person name="Saif S."/>
            <person name="Whiston E.A."/>
            <person name="Young S."/>
            <person name="Zeng Q."/>
            <person name="Goldman W.E."/>
            <person name="Mardis E.R."/>
            <person name="Taylor J.W."/>
            <person name="McEwen J.G."/>
            <person name="Clay O.K."/>
            <person name="Klein B.S."/>
            <person name="Cuomo C.A."/>
        </authorList>
    </citation>
    <scope>NUCLEOTIDE SEQUENCE [LARGE SCALE GENOMIC DNA]</scope>
    <source>
        <strain>SLH14081</strain>
    </source>
</reference>
<accession>C5JHY1</accession>
<accession>A0A179UET9</accession>